<name>CWC23_KLULA</name>
<keyword id="KW-0143">Chaperone</keyword>
<keyword id="KW-0963">Cytoplasm</keyword>
<keyword id="KW-0507">mRNA processing</keyword>
<keyword id="KW-0508">mRNA splicing</keyword>
<keyword id="KW-0539">Nucleus</keyword>
<keyword id="KW-1185">Reference proteome</keyword>
<keyword id="KW-0747">Spliceosome</keyword>
<comment type="function">
    <text evidence="1">Involved in pre-mRNA splicing. May be involved in endoplasmic reticulum-associated protein degradation (ERAD) and required for growth at low and high temperatures (By similarity).</text>
</comment>
<comment type="subunit">
    <text evidence="1">Associated with the spliceosome.</text>
</comment>
<comment type="subcellular location">
    <subcellularLocation>
        <location evidence="1">Cytoplasm</location>
    </subcellularLocation>
    <subcellularLocation>
        <location evidence="1">Nucleus</location>
    </subcellularLocation>
</comment>
<comment type="similarity">
    <text evidence="3">Belongs to the DnaJ family.</text>
</comment>
<proteinExistence type="inferred from homology"/>
<sequence length="270" mass="32374">MDLAHVKDNHVDLYRILHIHVNDNEHLNSVTPTLINKQFRKLSLTLHPDKSNESDLNITRDRWDNLQSAYRILSEHKKEYDIWYQRTFLHSNRELLEKLEISEKAKKEKLISYDEIEKIQRYGQTLRKLVHFEIPISDWRNPSFTENTDDLNKLTETCLFRIKLVKRKEYNNEQKLNEWFRKIDIPITVQYYSENNDQREDDLVVYASARNVQTTIEILRTIENEKELHPDILEFTPAVEFEHFSFKEKVELDPSLGSIIYNSSDNPIIM</sequence>
<reference key="1">
    <citation type="journal article" date="2004" name="Nature">
        <title>Genome evolution in yeasts.</title>
        <authorList>
            <person name="Dujon B."/>
            <person name="Sherman D."/>
            <person name="Fischer G."/>
            <person name="Durrens P."/>
            <person name="Casaregola S."/>
            <person name="Lafontaine I."/>
            <person name="de Montigny J."/>
            <person name="Marck C."/>
            <person name="Neuveglise C."/>
            <person name="Talla E."/>
            <person name="Goffard N."/>
            <person name="Frangeul L."/>
            <person name="Aigle M."/>
            <person name="Anthouard V."/>
            <person name="Babour A."/>
            <person name="Barbe V."/>
            <person name="Barnay S."/>
            <person name="Blanchin S."/>
            <person name="Beckerich J.-M."/>
            <person name="Beyne E."/>
            <person name="Bleykasten C."/>
            <person name="Boisrame A."/>
            <person name="Boyer J."/>
            <person name="Cattolico L."/>
            <person name="Confanioleri F."/>
            <person name="de Daruvar A."/>
            <person name="Despons L."/>
            <person name="Fabre E."/>
            <person name="Fairhead C."/>
            <person name="Ferry-Dumazet H."/>
            <person name="Groppi A."/>
            <person name="Hantraye F."/>
            <person name="Hennequin C."/>
            <person name="Jauniaux N."/>
            <person name="Joyet P."/>
            <person name="Kachouri R."/>
            <person name="Kerrest A."/>
            <person name="Koszul R."/>
            <person name="Lemaire M."/>
            <person name="Lesur I."/>
            <person name="Ma L."/>
            <person name="Muller H."/>
            <person name="Nicaud J.-M."/>
            <person name="Nikolski M."/>
            <person name="Oztas S."/>
            <person name="Ozier-Kalogeropoulos O."/>
            <person name="Pellenz S."/>
            <person name="Potier S."/>
            <person name="Richard G.-F."/>
            <person name="Straub M.-L."/>
            <person name="Suleau A."/>
            <person name="Swennen D."/>
            <person name="Tekaia F."/>
            <person name="Wesolowski-Louvel M."/>
            <person name="Westhof E."/>
            <person name="Wirth B."/>
            <person name="Zeniou-Meyer M."/>
            <person name="Zivanovic Y."/>
            <person name="Bolotin-Fukuhara M."/>
            <person name="Thierry A."/>
            <person name="Bouchier C."/>
            <person name="Caudron B."/>
            <person name="Scarpelli C."/>
            <person name="Gaillardin C."/>
            <person name="Weissenbach J."/>
            <person name="Wincker P."/>
            <person name="Souciet J.-L."/>
        </authorList>
    </citation>
    <scope>NUCLEOTIDE SEQUENCE [LARGE SCALE GENOMIC DNA]</scope>
    <source>
        <strain>ATCC 8585 / CBS 2359 / DSM 70799 / NBRC 1267 / NRRL Y-1140 / WM37</strain>
    </source>
</reference>
<organism>
    <name type="scientific">Kluyveromyces lactis (strain ATCC 8585 / CBS 2359 / DSM 70799 / NBRC 1267 / NRRL Y-1140 / WM37)</name>
    <name type="common">Yeast</name>
    <name type="synonym">Candida sphaerica</name>
    <dbReference type="NCBI Taxonomy" id="284590"/>
    <lineage>
        <taxon>Eukaryota</taxon>
        <taxon>Fungi</taxon>
        <taxon>Dikarya</taxon>
        <taxon>Ascomycota</taxon>
        <taxon>Saccharomycotina</taxon>
        <taxon>Saccharomycetes</taxon>
        <taxon>Saccharomycetales</taxon>
        <taxon>Saccharomycetaceae</taxon>
        <taxon>Kluyveromyces</taxon>
    </lineage>
</organism>
<gene>
    <name type="primary">CWC23</name>
    <name type="ordered locus">KLLA0C02541g</name>
</gene>
<feature type="chain" id="PRO_0000071127" description="Pre-mRNA-splicing factor CWC23">
    <location>
        <begin position="1"/>
        <end position="270"/>
    </location>
</feature>
<feature type="domain" description="J" evidence="2">
    <location>
        <begin position="12"/>
        <end position="84"/>
    </location>
</feature>
<protein>
    <recommendedName>
        <fullName>Pre-mRNA-splicing factor CWC23</fullName>
    </recommendedName>
</protein>
<accession>Q6CUS9</accession>
<evidence type="ECO:0000250" key="1"/>
<evidence type="ECO:0000255" key="2">
    <source>
        <dbReference type="PROSITE-ProRule" id="PRU00286"/>
    </source>
</evidence>
<evidence type="ECO:0000305" key="3"/>
<dbReference type="EMBL" id="CR382123">
    <property type="protein sequence ID" value="CAH01161.1"/>
    <property type="molecule type" value="Genomic_DNA"/>
</dbReference>
<dbReference type="RefSeq" id="XP_452310.1">
    <property type="nucleotide sequence ID" value="XM_452310.1"/>
</dbReference>
<dbReference type="SMR" id="Q6CUS9"/>
<dbReference type="FunCoup" id="Q6CUS9">
    <property type="interactions" value="161"/>
</dbReference>
<dbReference type="STRING" id="284590.Q6CUS9"/>
<dbReference type="PaxDb" id="284590-Q6CUS9"/>
<dbReference type="KEGG" id="kla:KLLA0_C02541g"/>
<dbReference type="eggNOG" id="KOG0716">
    <property type="taxonomic scope" value="Eukaryota"/>
</dbReference>
<dbReference type="HOGENOM" id="CLU_063717_0_0_1"/>
<dbReference type="InParanoid" id="Q6CUS9"/>
<dbReference type="OMA" id="KHFKLPY"/>
<dbReference type="Proteomes" id="UP000000598">
    <property type="component" value="Chromosome C"/>
</dbReference>
<dbReference type="GO" id="GO:0005737">
    <property type="term" value="C:cytoplasm"/>
    <property type="evidence" value="ECO:0007669"/>
    <property type="project" value="UniProtKB-SubCell"/>
</dbReference>
<dbReference type="GO" id="GO:0005681">
    <property type="term" value="C:spliceosomal complex"/>
    <property type="evidence" value="ECO:0007669"/>
    <property type="project" value="UniProtKB-KW"/>
</dbReference>
<dbReference type="GO" id="GO:0006397">
    <property type="term" value="P:mRNA processing"/>
    <property type="evidence" value="ECO:0007669"/>
    <property type="project" value="UniProtKB-KW"/>
</dbReference>
<dbReference type="GO" id="GO:0008380">
    <property type="term" value="P:RNA splicing"/>
    <property type="evidence" value="ECO:0007669"/>
    <property type="project" value="UniProtKB-KW"/>
</dbReference>
<dbReference type="CDD" id="cd06257">
    <property type="entry name" value="DnaJ"/>
    <property type="match status" value="1"/>
</dbReference>
<dbReference type="Gene3D" id="1.10.287.110">
    <property type="entry name" value="DnaJ domain"/>
    <property type="match status" value="1"/>
</dbReference>
<dbReference type="InterPro" id="IPR001623">
    <property type="entry name" value="DnaJ_domain"/>
</dbReference>
<dbReference type="InterPro" id="IPR036869">
    <property type="entry name" value="J_dom_sf"/>
</dbReference>
<dbReference type="Pfam" id="PF00226">
    <property type="entry name" value="DnaJ"/>
    <property type="match status" value="1"/>
</dbReference>
<dbReference type="SMART" id="SM00271">
    <property type="entry name" value="DnaJ"/>
    <property type="match status" value="1"/>
</dbReference>
<dbReference type="SUPFAM" id="SSF46565">
    <property type="entry name" value="Chaperone J-domain"/>
    <property type="match status" value="1"/>
</dbReference>
<dbReference type="PROSITE" id="PS50076">
    <property type="entry name" value="DNAJ_2"/>
    <property type="match status" value="1"/>
</dbReference>